<keyword id="KW-0479">Metal-binding</keyword>
<keyword id="KW-0597">Phosphoprotein</keyword>
<keyword id="KW-1185">Reference proteome</keyword>
<keyword id="KW-0677">Repeat</keyword>
<keyword id="KW-0862">Zinc</keyword>
<keyword id="KW-0863">Zinc-finger</keyword>
<dbReference type="EMBL" id="CU329672">
    <property type="protein sequence ID" value="CAA20774.2"/>
    <property type="molecule type" value="Genomic_DNA"/>
</dbReference>
<dbReference type="PIR" id="T41213">
    <property type="entry name" value="T41213"/>
</dbReference>
<dbReference type="RefSeq" id="NP_588409.2">
    <property type="nucleotide sequence ID" value="NM_001023400.2"/>
</dbReference>
<dbReference type="BioGRID" id="275881">
    <property type="interactions" value="5"/>
</dbReference>
<dbReference type="STRING" id="284812.O74463"/>
<dbReference type="iPTMnet" id="O74463"/>
<dbReference type="PaxDb" id="4896-SPCC1739.01.1"/>
<dbReference type="EnsemblFungi" id="SPCC1739.01.1">
    <property type="protein sequence ID" value="SPCC1739.01.1:pep"/>
    <property type="gene ID" value="SPCC1739.01"/>
</dbReference>
<dbReference type="KEGG" id="spo:2539315"/>
<dbReference type="PomBase" id="SPCC1739.01"/>
<dbReference type="VEuPathDB" id="FungiDB:SPCC1739.01"/>
<dbReference type="eggNOG" id="KOG1039">
    <property type="taxonomic scope" value="Eukaryota"/>
</dbReference>
<dbReference type="HOGENOM" id="CLU_497970_0_0_1"/>
<dbReference type="InParanoid" id="O74463"/>
<dbReference type="OMA" id="TAGENCP"/>
<dbReference type="PRO" id="PR:O74463"/>
<dbReference type="Proteomes" id="UP000002485">
    <property type="component" value="Chromosome III"/>
</dbReference>
<dbReference type="GO" id="GO:0005829">
    <property type="term" value="C:cytosol"/>
    <property type="evidence" value="ECO:0007005"/>
    <property type="project" value="PomBase"/>
</dbReference>
<dbReference type="GO" id="GO:0005634">
    <property type="term" value="C:nucleus"/>
    <property type="evidence" value="ECO:0007669"/>
    <property type="project" value="UniProtKB-ARBA"/>
</dbReference>
<dbReference type="GO" id="GO:0061630">
    <property type="term" value="F:ubiquitin protein ligase activity"/>
    <property type="evidence" value="ECO:0000318"/>
    <property type="project" value="GO_Central"/>
</dbReference>
<dbReference type="GO" id="GO:0008270">
    <property type="term" value="F:zinc ion binding"/>
    <property type="evidence" value="ECO:0007669"/>
    <property type="project" value="UniProtKB-KW"/>
</dbReference>
<dbReference type="GO" id="GO:0016071">
    <property type="term" value="P:mRNA metabolic process"/>
    <property type="evidence" value="ECO:0007669"/>
    <property type="project" value="UniProtKB-ARBA"/>
</dbReference>
<dbReference type="GO" id="GO:0000209">
    <property type="term" value="P:protein polyubiquitination"/>
    <property type="evidence" value="ECO:0007669"/>
    <property type="project" value="InterPro"/>
</dbReference>
<dbReference type="GO" id="GO:0016567">
    <property type="term" value="P:protein ubiquitination"/>
    <property type="evidence" value="ECO:0000318"/>
    <property type="project" value="GO_Central"/>
</dbReference>
<dbReference type="Gene3D" id="4.10.1000.10">
    <property type="entry name" value="Zinc finger, CCCH-type"/>
    <property type="match status" value="1"/>
</dbReference>
<dbReference type="InterPro" id="IPR045072">
    <property type="entry name" value="MKRN-like"/>
</dbReference>
<dbReference type="InterPro" id="IPR041367">
    <property type="entry name" value="Znf-CCCH_4"/>
</dbReference>
<dbReference type="InterPro" id="IPR000571">
    <property type="entry name" value="Znf_CCCH"/>
</dbReference>
<dbReference type="InterPro" id="IPR036855">
    <property type="entry name" value="Znf_CCCH_sf"/>
</dbReference>
<dbReference type="PANTHER" id="PTHR11224:SF58">
    <property type="entry name" value="C3H1-TYPE DOMAIN-CONTAINING PROTEIN"/>
    <property type="match status" value="1"/>
</dbReference>
<dbReference type="PANTHER" id="PTHR11224">
    <property type="entry name" value="MAKORIN-RELATED"/>
    <property type="match status" value="1"/>
</dbReference>
<dbReference type="Pfam" id="PF00642">
    <property type="entry name" value="zf-CCCH"/>
    <property type="match status" value="1"/>
</dbReference>
<dbReference type="Pfam" id="PF18044">
    <property type="entry name" value="zf-CCCH_4"/>
    <property type="match status" value="1"/>
</dbReference>
<dbReference type="SMART" id="SM00356">
    <property type="entry name" value="ZnF_C3H1"/>
    <property type="match status" value="2"/>
</dbReference>
<dbReference type="SUPFAM" id="SSF90229">
    <property type="entry name" value="CCCH zinc finger"/>
    <property type="match status" value="2"/>
</dbReference>
<dbReference type="PROSITE" id="PS50103">
    <property type="entry name" value="ZF_C3H1"/>
    <property type="match status" value="2"/>
</dbReference>
<protein>
    <recommendedName>
        <fullName>Uncharacterized protein C1739.01</fullName>
    </recommendedName>
</protein>
<name>YQC1_SCHPO</name>
<organism>
    <name type="scientific">Schizosaccharomyces pombe (strain 972 / ATCC 24843)</name>
    <name type="common">Fission yeast</name>
    <dbReference type="NCBI Taxonomy" id="284812"/>
    <lineage>
        <taxon>Eukaryota</taxon>
        <taxon>Fungi</taxon>
        <taxon>Dikarya</taxon>
        <taxon>Ascomycota</taxon>
        <taxon>Taphrinomycotina</taxon>
        <taxon>Schizosaccharomycetes</taxon>
        <taxon>Schizosaccharomycetales</taxon>
        <taxon>Schizosaccharomycetaceae</taxon>
        <taxon>Schizosaccharomyces</taxon>
    </lineage>
</organism>
<gene>
    <name type="ORF">SPCC1739.01</name>
    <name type="ORF">SPCC1906.05</name>
</gene>
<feature type="chain" id="PRO_0000116888" description="Uncharacterized protein C1739.01">
    <location>
        <begin position="1"/>
        <end position="547"/>
    </location>
</feature>
<feature type="zinc finger region" description="C3H1-type 1" evidence="1">
    <location>
        <begin position="41"/>
        <end position="67"/>
    </location>
</feature>
<feature type="zinc finger region" description="C3H1-type 2" evidence="1">
    <location>
        <begin position="68"/>
        <end position="95"/>
    </location>
</feature>
<feature type="region of interest" description="Disordered" evidence="2">
    <location>
        <begin position="1"/>
        <end position="37"/>
    </location>
</feature>
<feature type="region of interest" description="Disordered" evidence="2">
    <location>
        <begin position="132"/>
        <end position="176"/>
    </location>
</feature>
<feature type="region of interest" description="Disordered" evidence="2">
    <location>
        <begin position="526"/>
        <end position="547"/>
    </location>
</feature>
<feature type="compositionally biased region" description="Basic and acidic residues" evidence="2">
    <location>
        <begin position="10"/>
        <end position="21"/>
    </location>
</feature>
<feature type="compositionally biased region" description="Polar residues" evidence="2">
    <location>
        <begin position="24"/>
        <end position="37"/>
    </location>
</feature>
<feature type="compositionally biased region" description="Polar residues" evidence="2">
    <location>
        <begin position="147"/>
        <end position="162"/>
    </location>
</feature>
<feature type="compositionally biased region" description="Polar residues" evidence="2">
    <location>
        <begin position="526"/>
        <end position="536"/>
    </location>
</feature>
<feature type="compositionally biased region" description="Acidic residues" evidence="2">
    <location>
        <begin position="537"/>
        <end position="547"/>
    </location>
</feature>
<feature type="modified residue" description="Phosphoserine" evidence="3">
    <location>
        <position position="343"/>
    </location>
</feature>
<feature type="modified residue" description="Phosphotyrosine" evidence="3">
    <location>
        <position position="344"/>
    </location>
</feature>
<feature type="modified residue" description="Phosphoserine" evidence="3">
    <location>
        <position position="353"/>
    </location>
</feature>
<feature type="modified residue" description="Phosphoserine" evidence="3">
    <location>
        <position position="355"/>
    </location>
</feature>
<feature type="modified residue" description="Phosphoserine" evidence="3">
    <location>
        <position position="483"/>
    </location>
</feature>
<feature type="modified residue" description="Phosphoserine" evidence="3">
    <location>
        <position position="489"/>
    </location>
</feature>
<feature type="modified residue" description="Phosphoserine" evidence="3">
    <location>
        <position position="495"/>
    </location>
</feature>
<feature type="modified residue" description="Phosphoserine" evidence="3">
    <location>
        <position position="499"/>
    </location>
</feature>
<feature type="modified residue" description="Phosphothreonine" evidence="3">
    <location>
        <position position="502"/>
    </location>
</feature>
<proteinExistence type="evidence at protein level"/>
<accession>O74463</accession>
<accession>O74488</accession>
<sequence length="547" mass="57978">MSAASSAIPKRSDPRLLDQKKSAKSTLPKNTPENGVSTVKNLQHVPCKFFRNGTCTAGENCPFSHSLETERPICKYFLKGNCKFGPKCALSHALPGNTNLPNGTSTNTMASMAANGGASSVASKQMGANQISPSLSSKTMKNPADKANNTTATDVRGNTATSPYFPFSRSPGRHSGNSTINGMMTTPNFLSSGVNSRSVDEFNNSSSGFPSSLNGIPIASPPLATSPTSFSLASSASSTNLGGSKGLLFQQMTSENNRDYFSRRPTLLNTYGNRCSSTDTLSSLSRLTSQDPLKASLPLQSPPLAPKTGVSLSRPRLTLDQSLGNLSLGSGINQRRQVPRSNSYAGAFPSVVSASLPTKVDLNHQMDVSDEEQRFLSTPLGSFDESILGSSPINRLSSSFKQYTSSLKSPGLSTRTSSTMNSLNSSRFGAYFSKSRYVEGSGSMSTTPLATSVNNSYKLPSGFSVREEAVFSSPTTEGSRPVSLARLKSEPIFRSDTASPETIAGLGDTKNDPVVSTNNSVSRITVANSSPPWNSTVEEETPFQMDD</sequence>
<evidence type="ECO:0000255" key="1">
    <source>
        <dbReference type="PROSITE-ProRule" id="PRU00723"/>
    </source>
</evidence>
<evidence type="ECO:0000256" key="2">
    <source>
        <dbReference type="SAM" id="MobiDB-lite"/>
    </source>
</evidence>
<evidence type="ECO:0000269" key="3">
    <source>
    </source>
</evidence>
<reference key="1">
    <citation type="journal article" date="2002" name="Nature">
        <title>The genome sequence of Schizosaccharomyces pombe.</title>
        <authorList>
            <person name="Wood V."/>
            <person name="Gwilliam R."/>
            <person name="Rajandream M.A."/>
            <person name="Lyne M.H."/>
            <person name="Lyne R."/>
            <person name="Stewart A."/>
            <person name="Sgouros J.G."/>
            <person name="Peat N."/>
            <person name="Hayles J."/>
            <person name="Baker S.G."/>
            <person name="Basham D."/>
            <person name="Bowman S."/>
            <person name="Brooks K."/>
            <person name="Brown D."/>
            <person name="Brown S."/>
            <person name="Chillingworth T."/>
            <person name="Churcher C.M."/>
            <person name="Collins M."/>
            <person name="Connor R."/>
            <person name="Cronin A."/>
            <person name="Davis P."/>
            <person name="Feltwell T."/>
            <person name="Fraser A."/>
            <person name="Gentles S."/>
            <person name="Goble A."/>
            <person name="Hamlin N."/>
            <person name="Harris D.E."/>
            <person name="Hidalgo J."/>
            <person name="Hodgson G."/>
            <person name="Holroyd S."/>
            <person name="Hornsby T."/>
            <person name="Howarth S."/>
            <person name="Huckle E.J."/>
            <person name="Hunt S."/>
            <person name="Jagels K."/>
            <person name="James K.D."/>
            <person name="Jones L."/>
            <person name="Jones M."/>
            <person name="Leather S."/>
            <person name="McDonald S."/>
            <person name="McLean J."/>
            <person name="Mooney P."/>
            <person name="Moule S."/>
            <person name="Mungall K.L."/>
            <person name="Murphy L.D."/>
            <person name="Niblett D."/>
            <person name="Odell C."/>
            <person name="Oliver K."/>
            <person name="O'Neil S."/>
            <person name="Pearson D."/>
            <person name="Quail M.A."/>
            <person name="Rabbinowitsch E."/>
            <person name="Rutherford K.M."/>
            <person name="Rutter S."/>
            <person name="Saunders D."/>
            <person name="Seeger K."/>
            <person name="Sharp S."/>
            <person name="Skelton J."/>
            <person name="Simmonds M.N."/>
            <person name="Squares R."/>
            <person name="Squares S."/>
            <person name="Stevens K."/>
            <person name="Taylor K."/>
            <person name="Taylor R.G."/>
            <person name="Tivey A."/>
            <person name="Walsh S.V."/>
            <person name="Warren T."/>
            <person name="Whitehead S."/>
            <person name="Woodward J.R."/>
            <person name="Volckaert G."/>
            <person name="Aert R."/>
            <person name="Robben J."/>
            <person name="Grymonprez B."/>
            <person name="Weltjens I."/>
            <person name="Vanstreels E."/>
            <person name="Rieger M."/>
            <person name="Schaefer M."/>
            <person name="Mueller-Auer S."/>
            <person name="Gabel C."/>
            <person name="Fuchs M."/>
            <person name="Duesterhoeft A."/>
            <person name="Fritzc C."/>
            <person name="Holzer E."/>
            <person name="Moestl D."/>
            <person name="Hilbert H."/>
            <person name="Borzym K."/>
            <person name="Langer I."/>
            <person name="Beck A."/>
            <person name="Lehrach H."/>
            <person name="Reinhardt R."/>
            <person name="Pohl T.M."/>
            <person name="Eger P."/>
            <person name="Zimmermann W."/>
            <person name="Wedler H."/>
            <person name="Wambutt R."/>
            <person name="Purnelle B."/>
            <person name="Goffeau A."/>
            <person name="Cadieu E."/>
            <person name="Dreano S."/>
            <person name="Gloux S."/>
            <person name="Lelaure V."/>
            <person name="Mottier S."/>
            <person name="Galibert F."/>
            <person name="Aves S.J."/>
            <person name="Xiang Z."/>
            <person name="Hunt C."/>
            <person name="Moore K."/>
            <person name="Hurst S.M."/>
            <person name="Lucas M."/>
            <person name="Rochet M."/>
            <person name="Gaillardin C."/>
            <person name="Tallada V.A."/>
            <person name="Garzon A."/>
            <person name="Thode G."/>
            <person name="Daga R.R."/>
            <person name="Cruzado L."/>
            <person name="Jimenez J."/>
            <person name="Sanchez M."/>
            <person name="del Rey F."/>
            <person name="Benito J."/>
            <person name="Dominguez A."/>
            <person name="Revuelta J.L."/>
            <person name="Moreno S."/>
            <person name="Armstrong J."/>
            <person name="Forsburg S.L."/>
            <person name="Cerutti L."/>
            <person name="Lowe T."/>
            <person name="McCombie W.R."/>
            <person name="Paulsen I."/>
            <person name="Potashkin J."/>
            <person name="Shpakovski G.V."/>
            <person name="Ussery D."/>
            <person name="Barrell B.G."/>
            <person name="Nurse P."/>
        </authorList>
    </citation>
    <scope>NUCLEOTIDE SEQUENCE [LARGE SCALE GENOMIC DNA]</scope>
    <source>
        <strain>972 / ATCC 24843</strain>
    </source>
</reference>
<reference key="2">
    <citation type="journal article" date="2008" name="J. Proteome Res.">
        <title>Phosphoproteome analysis of fission yeast.</title>
        <authorList>
            <person name="Wilson-Grady J.T."/>
            <person name="Villen J."/>
            <person name="Gygi S.P."/>
        </authorList>
    </citation>
    <scope>PHOSPHORYLATION [LARGE SCALE ANALYSIS] AT SER-343; TYR-344; SER-353; SER-355; SER-483; SER-489; SER-495; SER-499 AND THR-502</scope>
    <scope>IDENTIFICATION BY MASS SPECTROMETRY</scope>
</reference>